<protein>
    <recommendedName>
        <fullName>Membrane protein PB1A10.07c</fullName>
    </recommendedName>
</protein>
<organism>
    <name type="scientific">Schizosaccharomyces pombe (strain 972 / ATCC 24843)</name>
    <name type="common">Fission yeast</name>
    <dbReference type="NCBI Taxonomy" id="284812"/>
    <lineage>
        <taxon>Eukaryota</taxon>
        <taxon>Fungi</taxon>
        <taxon>Dikarya</taxon>
        <taxon>Ascomycota</taxon>
        <taxon>Taphrinomycotina</taxon>
        <taxon>Schizosaccharomycetes</taxon>
        <taxon>Schizosaccharomycetales</taxon>
        <taxon>Schizosaccharomycetaceae</taxon>
        <taxon>Schizosaccharomyces</taxon>
    </lineage>
</organism>
<evidence type="ECO:0000255" key="1"/>
<evidence type="ECO:0000269" key="2">
    <source>
    </source>
</evidence>
<evidence type="ECO:0000305" key="3"/>
<keyword id="KW-0472">Membrane</keyword>
<keyword id="KW-1185">Reference proteome</keyword>
<keyword id="KW-0812">Transmembrane</keyword>
<keyword id="KW-1133">Transmembrane helix</keyword>
<feature type="chain" id="PRO_0000218973" description="Membrane protein PB1A10.07c">
    <location>
        <begin position="1"/>
        <end position="441"/>
    </location>
</feature>
<feature type="transmembrane region" description="Helical" evidence="1">
    <location>
        <begin position="1"/>
        <end position="21"/>
    </location>
</feature>
<feature type="transmembrane region" description="Helical" evidence="1">
    <location>
        <begin position="41"/>
        <end position="61"/>
    </location>
</feature>
<feature type="transmembrane region" description="Helical" evidence="1">
    <location>
        <begin position="97"/>
        <end position="117"/>
    </location>
</feature>
<feature type="transmembrane region" description="Helical" evidence="1">
    <location>
        <begin position="128"/>
        <end position="148"/>
    </location>
</feature>
<feature type="transmembrane region" description="Helical" evidence="1">
    <location>
        <begin position="158"/>
        <end position="178"/>
    </location>
</feature>
<feature type="transmembrane region" description="Helical" evidence="1">
    <location>
        <begin position="206"/>
        <end position="226"/>
    </location>
</feature>
<feature type="transmembrane region" description="Helical" evidence="1">
    <location>
        <begin position="235"/>
        <end position="255"/>
    </location>
</feature>
<feature type="transmembrane region" description="Helical" evidence="1">
    <location>
        <begin position="263"/>
        <end position="283"/>
    </location>
</feature>
<feature type="transmembrane region" description="Helical" evidence="1">
    <location>
        <begin position="307"/>
        <end position="327"/>
    </location>
</feature>
<feature type="transmembrane region" description="Helical" evidence="1">
    <location>
        <begin position="364"/>
        <end position="384"/>
    </location>
</feature>
<feature type="transmembrane region" description="Helical" evidence="1">
    <location>
        <begin position="415"/>
        <end position="435"/>
    </location>
</feature>
<reference key="1">
    <citation type="journal article" date="2002" name="Nature">
        <title>The genome sequence of Schizosaccharomyces pombe.</title>
        <authorList>
            <person name="Wood V."/>
            <person name="Gwilliam R."/>
            <person name="Rajandream M.A."/>
            <person name="Lyne M.H."/>
            <person name="Lyne R."/>
            <person name="Stewart A."/>
            <person name="Sgouros J.G."/>
            <person name="Peat N."/>
            <person name="Hayles J."/>
            <person name="Baker S.G."/>
            <person name="Basham D."/>
            <person name="Bowman S."/>
            <person name="Brooks K."/>
            <person name="Brown D."/>
            <person name="Brown S."/>
            <person name="Chillingworth T."/>
            <person name="Churcher C.M."/>
            <person name="Collins M."/>
            <person name="Connor R."/>
            <person name="Cronin A."/>
            <person name="Davis P."/>
            <person name="Feltwell T."/>
            <person name="Fraser A."/>
            <person name="Gentles S."/>
            <person name="Goble A."/>
            <person name="Hamlin N."/>
            <person name="Harris D.E."/>
            <person name="Hidalgo J."/>
            <person name="Hodgson G."/>
            <person name="Holroyd S."/>
            <person name="Hornsby T."/>
            <person name="Howarth S."/>
            <person name="Huckle E.J."/>
            <person name="Hunt S."/>
            <person name="Jagels K."/>
            <person name="James K.D."/>
            <person name="Jones L."/>
            <person name="Jones M."/>
            <person name="Leather S."/>
            <person name="McDonald S."/>
            <person name="McLean J."/>
            <person name="Mooney P."/>
            <person name="Moule S."/>
            <person name="Mungall K.L."/>
            <person name="Murphy L.D."/>
            <person name="Niblett D."/>
            <person name="Odell C."/>
            <person name="Oliver K."/>
            <person name="O'Neil S."/>
            <person name="Pearson D."/>
            <person name="Quail M.A."/>
            <person name="Rabbinowitsch E."/>
            <person name="Rutherford K.M."/>
            <person name="Rutter S."/>
            <person name="Saunders D."/>
            <person name="Seeger K."/>
            <person name="Sharp S."/>
            <person name="Skelton J."/>
            <person name="Simmonds M.N."/>
            <person name="Squares R."/>
            <person name="Squares S."/>
            <person name="Stevens K."/>
            <person name="Taylor K."/>
            <person name="Taylor R.G."/>
            <person name="Tivey A."/>
            <person name="Walsh S.V."/>
            <person name="Warren T."/>
            <person name="Whitehead S."/>
            <person name="Woodward J.R."/>
            <person name="Volckaert G."/>
            <person name="Aert R."/>
            <person name="Robben J."/>
            <person name="Grymonprez B."/>
            <person name="Weltjens I."/>
            <person name="Vanstreels E."/>
            <person name="Rieger M."/>
            <person name="Schaefer M."/>
            <person name="Mueller-Auer S."/>
            <person name="Gabel C."/>
            <person name="Fuchs M."/>
            <person name="Duesterhoeft A."/>
            <person name="Fritzc C."/>
            <person name="Holzer E."/>
            <person name="Moestl D."/>
            <person name="Hilbert H."/>
            <person name="Borzym K."/>
            <person name="Langer I."/>
            <person name="Beck A."/>
            <person name="Lehrach H."/>
            <person name="Reinhardt R."/>
            <person name="Pohl T.M."/>
            <person name="Eger P."/>
            <person name="Zimmermann W."/>
            <person name="Wedler H."/>
            <person name="Wambutt R."/>
            <person name="Purnelle B."/>
            <person name="Goffeau A."/>
            <person name="Cadieu E."/>
            <person name="Dreano S."/>
            <person name="Gloux S."/>
            <person name="Lelaure V."/>
            <person name="Mottier S."/>
            <person name="Galibert F."/>
            <person name="Aves S.J."/>
            <person name="Xiang Z."/>
            <person name="Hunt C."/>
            <person name="Moore K."/>
            <person name="Hurst S.M."/>
            <person name="Lucas M."/>
            <person name="Rochet M."/>
            <person name="Gaillardin C."/>
            <person name="Tallada V.A."/>
            <person name="Garzon A."/>
            <person name="Thode G."/>
            <person name="Daga R.R."/>
            <person name="Cruzado L."/>
            <person name="Jimenez J."/>
            <person name="Sanchez M."/>
            <person name="del Rey F."/>
            <person name="Benito J."/>
            <person name="Dominguez A."/>
            <person name="Revuelta J.L."/>
            <person name="Moreno S."/>
            <person name="Armstrong J."/>
            <person name="Forsburg S.L."/>
            <person name="Cerutti L."/>
            <person name="Lowe T."/>
            <person name="McCombie W.R."/>
            <person name="Paulsen I."/>
            <person name="Potashkin J."/>
            <person name="Shpakovski G.V."/>
            <person name="Ussery D."/>
            <person name="Barrell B.G."/>
            <person name="Nurse P."/>
        </authorList>
    </citation>
    <scope>NUCLEOTIDE SEQUENCE [LARGE SCALE GENOMIC DNA]</scope>
    <source>
        <strain>972 / ATCC 24843</strain>
    </source>
</reference>
<reference key="2">
    <citation type="journal article" date="2000" name="Genes Cells">
        <title>Large-scale screening of intracellular protein localization in living fission yeast cells by the use of a GFP-fusion genomic DNA library.</title>
        <authorList>
            <person name="Ding D.-Q."/>
            <person name="Tomita Y."/>
            <person name="Yamamoto A."/>
            <person name="Chikashige Y."/>
            <person name="Haraguchi T."/>
            <person name="Hiraoka Y."/>
        </authorList>
    </citation>
    <scope>NUCLEOTIDE SEQUENCE [LARGE SCALE GENOMIC DNA] OF 1-188</scope>
    <scope>SUBCELLULAR LOCATION</scope>
    <source>
        <strain>ATCC 38364 / 968</strain>
    </source>
</reference>
<name>YK17_SCHPO</name>
<comment type="subcellular location">
    <subcellularLocation>
        <location evidence="2">Membrane</location>
        <topology evidence="2">Multi-pass membrane protein</topology>
    </subcellularLocation>
</comment>
<comment type="similarity">
    <text evidence="3">Belongs to the TDE1 family.</text>
</comment>
<dbReference type="EMBL" id="CU329670">
    <property type="protein sequence ID" value="CAC21480.1"/>
    <property type="molecule type" value="Genomic_DNA"/>
</dbReference>
<dbReference type="EMBL" id="AB027945">
    <property type="protein sequence ID" value="BAA87249.1"/>
    <property type="molecule type" value="Genomic_DNA"/>
</dbReference>
<dbReference type="RefSeq" id="NP_593521.1">
    <property type="nucleotide sequence ID" value="NM_001018955.2"/>
</dbReference>
<dbReference type="SMR" id="Q9HDY3"/>
<dbReference type="BioGRID" id="279791">
    <property type="interactions" value="4"/>
</dbReference>
<dbReference type="FunCoup" id="Q9HDY3">
    <property type="interactions" value="360"/>
</dbReference>
<dbReference type="STRING" id="284812.Q9HDY3"/>
<dbReference type="TCDB" id="9.A.29.3.1">
    <property type="family name" value="the lantibiotic immunity protein/serine connector (lip/sip) family"/>
</dbReference>
<dbReference type="PaxDb" id="4896-SPAPB1A10.07c.1"/>
<dbReference type="EnsemblFungi" id="SPAPB1A10.07c.1">
    <property type="protein sequence ID" value="SPAPB1A10.07c.1:pep"/>
    <property type="gene ID" value="SPAPB1A10.07c"/>
</dbReference>
<dbReference type="KEGG" id="spo:2543369"/>
<dbReference type="PomBase" id="SPAPB1A10.07c"/>
<dbReference type="VEuPathDB" id="FungiDB:SPAPB1A10.07c"/>
<dbReference type="eggNOG" id="KOG2592">
    <property type="taxonomic scope" value="Eukaryota"/>
</dbReference>
<dbReference type="HOGENOM" id="CLU_029574_2_0_1"/>
<dbReference type="InParanoid" id="Q9HDY3"/>
<dbReference type="OMA" id="DKHCNPL"/>
<dbReference type="PhylomeDB" id="Q9HDY3"/>
<dbReference type="Reactome" id="R-SPO-977347">
    <property type="pathway name" value="Serine biosynthesis"/>
</dbReference>
<dbReference type="PRO" id="PR:Q9HDY3"/>
<dbReference type="Proteomes" id="UP000002485">
    <property type="component" value="Chromosome I"/>
</dbReference>
<dbReference type="GO" id="GO:0016020">
    <property type="term" value="C:membrane"/>
    <property type="evidence" value="ECO:0000318"/>
    <property type="project" value="GO_Central"/>
</dbReference>
<dbReference type="GO" id="GO:0005886">
    <property type="term" value="C:plasma membrane"/>
    <property type="evidence" value="ECO:0000255"/>
    <property type="project" value="PomBase"/>
</dbReference>
<dbReference type="GO" id="GO:0090556">
    <property type="term" value="F:phosphatidylserine floppase activity"/>
    <property type="evidence" value="ECO:0000266"/>
    <property type="project" value="PomBase"/>
</dbReference>
<dbReference type="GO" id="GO:0006658">
    <property type="term" value="P:phosphatidylserine metabolic process"/>
    <property type="evidence" value="ECO:0000255"/>
    <property type="project" value="PomBase"/>
</dbReference>
<dbReference type="GO" id="GO:0030148">
    <property type="term" value="P:sphingolipid biosynthetic process"/>
    <property type="evidence" value="ECO:0000255"/>
    <property type="project" value="PomBase"/>
</dbReference>
<dbReference type="InterPro" id="IPR005016">
    <property type="entry name" value="TDE1/TMS"/>
</dbReference>
<dbReference type="PANTHER" id="PTHR10383">
    <property type="entry name" value="SERINE INCORPORATOR"/>
    <property type="match status" value="1"/>
</dbReference>
<dbReference type="PANTHER" id="PTHR10383:SF9">
    <property type="entry name" value="SERINE INCORPORATOR, ISOFORM F"/>
    <property type="match status" value="1"/>
</dbReference>
<dbReference type="Pfam" id="PF03348">
    <property type="entry name" value="Serinc"/>
    <property type="match status" value="1"/>
</dbReference>
<proteinExistence type="inferred from homology"/>
<accession>Q9HDY3</accession>
<accession>Q9UTX4</accession>
<gene>
    <name type="ORF">SPAPB1A10.07c</name>
</gene>
<sequence>MGAVLSIPLALASSLSGVVGIASSFLVTSVLSLTNSIQSNVGAVISYAVLYFVNSLLSWCMLSSWFNSKLSKLSAGYLQFDCQNDGKCYSVIAVHRLSFTLVMFHLFLAFILSLCNTRSRVAIKIQNGLWPFKIVLWFVLGIFSFFIPTKFLSFWGNIISVMGSALFIVYGLMLLVDFAHTWAERCVDRVLTSDSSSSKFYLIGSTVGMYVVGLVLTILTYVFFCASSCSFNQAINTINLLLCIAVSCLSVHPTIQEYNPRSGLAQSSMVMCYTCYLILSALANRPDEGQCNPWGNSASGTREFSKVIGAAFTFFTILYSAVRAASSRESDDSYSYLYADSHDMGVSTPLEDGSSEEDKHQSDYNFIWFHIVFVLAAFYTASLLTNWNTTSVYENQKNDVFVRIGFSYAAVWVKIITSWVCHGLYVWSCLAPVFFPYRFMI</sequence>